<reference key="1">
    <citation type="journal article" date="2001" name="Lancet">
        <title>Whole genome sequencing of meticillin-resistant Staphylococcus aureus.</title>
        <authorList>
            <person name="Kuroda M."/>
            <person name="Ohta T."/>
            <person name="Uchiyama I."/>
            <person name="Baba T."/>
            <person name="Yuzawa H."/>
            <person name="Kobayashi I."/>
            <person name="Cui L."/>
            <person name="Oguchi A."/>
            <person name="Aoki K."/>
            <person name="Nagai Y."/>
            <person name="Lian J.-Q."/>
            <person name="Ito T."/>
            <person name="Kanamori M."/>
            <person name="Matsumaru H."/>
            <person name="Maruyama A."/>
            <person name="Murakami H."/>
            <person name="Hosoyama A."/>
            <person name="Mizutani-Ui Y."/>
            <person name="Takahashi N.K."/>
            <person name="Sawano T."/>
            <person name="Inoue R."/>
            <person name="Kaito C."/>
            <person name="Sekimizu K."/>
            <person name="Hirakawa H."/>
            <person name="Kuhara S."/>
            <person name="Goto S."/>
            <person name="Yabuzaki J."/>
            <person name="Kanehisa M."/>
            <person name="Yamashita A."/>
            <person name="Oshima K."/>
            <person name="Furuya K."/>
            <person name="Yoshino C."/>
            <person name="Shiba T."/>
            <person name="Hattori M."/>
            <person name="Ogasawara N."/>
            <person name="Hayashi H."/>
            <person name="Hiramatsu K."/>
        </authorList>
    </citation>
    <scope>NUCLEOTIDE SEQUENCE [LARGE SCALE GENOMIC DNA]</scope>
    <source>
        <strain>Mu50 / ATCC 700699</strain>
    </source>
</reference>
<dbReference type="EMBL" id="BA000017">
    <property type="protein sequence ID" value="BAB56601.1"/>
    <property type="status" value="ALT_INIT"/>
    <property type="molecule type" value="Genomic_DNA"/>
</dbReference>
<dbReference type="SMR" id="Q99WG3"/>
<dbReference type="KEGG" id="sav:SAV0439"/>
<dbReference type="HOGENOM" id="CLU_071589_1_0_9"/>
<dbReference type="Proteomes" id="UP000002481">
    <property type="component" value="Chromosome"/>
</dbReference>
<dbReference type="GO" id="GO:0005886">
    <property type="term" value="C:plasma membrane"/>
    <property type="evidence" value="ECO:0007669"/>
    <property type="project" value="UniProtKB-SubCell"/>
</dbReference>
<dbReference type="Gene3D" id="2.50.20.40">
    <property type="match status" value="1"/>
</dbReference>
<dbReference type="InterPro" id="IPR007595">
    <property type="entry name" value="Csa"/>
</dbReference>
<dbReference type="InterPro" id="IPR038641">
    <property type="entry name" value="Csa_sf"/>
</dbReference>
<dbReference type="NCBIfam" id="TIGR01742">
    <property type="entry name" value="SA_tandem_lipo"/>
    <property type="match status" value="1"/>
</dbReference>
<dbReference type="Pfam" id="PF04507">
    <property type="entry name" value="DUF576"/>
    <property type="match status" value="1"/>
</dbReference>
<dbReference type="PROSITE" id="PS51257">
    <property type="entry name" value="PROKAR_LIPOPROTEIN"/>
    <property type="match status" value="1"/>
</dbReference>
<accession>Q99WG3</accession>
<protein>
    <recommendedName>
        <fullName>Uncharacterized lipoprotein SAV0439</fullName>
    </recommendedName>
</protein>
<organism>
    <name type="scientific">Staphylococcus aureus (strain Mu50 / ATCC 700699)</name>
    <dbReference type="NCBI Taxonomy" id="158878"/>
    <lineage>
        <taxon>Bacteria</taxon>
        <taxon>Bacillati</taxon>
        <taxon>Bacillota</taxon>
        <taxon>Bacilli</taxon>
        <taxon>Bacillales</taxon>
        <taxon>Staphylococcaceae</taxon>
        <taxon>Staphylococcus</taxon>
    </lineage>
</organism>
<gene>
    <name type="ordered locus">SAV0439</name>
</gene>
<sequence length="253" mass="29285">MCVVYRTSVLILLASGCSGVFDTPEDSKETQIKKSFAKTLDMYPIKNLEDLYDKEGYRDGEFKKGDKGTWVVRSEMIIQPKGKSLTSRGMILYMNRNTRTTTGYFSIEEIDSRKSLDERETEKKYPVKMINNKIIPTEEIKDEKLKKEIENFKFFVQYGSFKGIENYENGDISYNSEAPIYSAKYKLKNDDYNVKELRKRYNIPTEKAPKLLLKGSGDLKGSSVGYKEIEFIFIENKKENIYFSDGLNLIPSD</sequence>
<keyword id="KW-1003">Cell membrane</keyword>
<keyword id="KW-0449">Lipoprotein</keyword>
<keyword id="KW-0472">Membrane</keyword>
<keyword id="KW-0564">Palmitate</keyword>
<keyword id="KW-0732">Signal</keyword>
<comment type="subcellular location">
    <subcellularLocation>
        <location evidence="1">Cell membrane</location>
        <topology evidence="1">Lipid-anchor</topology>
    </subcellularLocation>
</comment>
<comment type="similarity">
    <text evidence="2">Belongs to the staphylococcal tandem lipoprotein family.</text>
</comment>
<comment type="sequence caution" evidence="2">
    <conflict type="erroneous initiation">
        <sequence resource="EMBL-CDS" id="BAB56601"/>
    </conflict>
</comment>
<evidence type="ECO:0000255" key="1">
    <source>
        <dbReference type="PROSITE-ProRule" id="PRU00303"/>
    </source>
</evidence>
<evidence type="ECO:0000305" key="2"/>
<proteinExistence type="inferred from homology"/>
<name>Y439_STAAM</name>
<feature type="signal peptide" evidence="1">
    <location>
        <begin position="1"/>
        <end position="16"/>
    </location>
</feature>
<feature type="chain" id="PRO_0000282126" description="Uncharacterized lipoprotein SAV0439">
    <location>
        <begin position="17"/>
        <end position="253"/>
    </location>
</feature>
<feature type="lipid moiety-binding region" description="N-palmitoyl cysteine" evidence="1">
    <location>
        <position position="17"/>
    </location>
</feature>
<feature type="lipid moiety-binding region" description="S-diacylglycerol cysteine" evidence="1">
    <location>
        <position position="17"/>
    </location>
</feature>